<evidence type="ECO:0000250" key="1">
    <source>
        <dbReference type="UniProtKB" id="P50389"/>
    </source>
</evidence>
<evidence type="ECO:0000255" key="2">
    <source>
        <dbReference type="HAMAP-Rule" id="MF_01627"/>
    </source>
</evidence>
<protein>
    <recommendedName>
        <fullName evidence="2">Purine nucleoside phosphorylase DeoD-type</fullName>
        <shortName evidence="2">PNP</shortName>
        <ecNumber evidence="2">2.4.2.1</ecNumber>
    </recommendedName>
</protein>
<sequence length="238" mass="25885">MTPHINAPEGAFADVVLMPGDPLRAKYIAETFLQDVVEVTNVRNMLGFTGTYKGRKISIMGHGMGIPSCSIYAKELITEYGVKKIIRVGSCGTVRMDVKVRDVIIGLGACTDSKVNRIRFKDNDFAAIADFDMAQAAVQAAKAKGKVVRVGNLFSADLFYTPDVEMFDVMEKYGILGVEMEAAGIYGVAAEYGAKALTICTVSDHIRTHEQTTAEERQLTFNDMIEIALDSVLIGDAL</sequence>
<dbReference type="EC" id="2.4.2.1" evidence="2"/>
<dbReference type="EMBL" id="L42023">
    <property type="protein sequence ID" value="AAC22176.1"/>
    <property type="molecule type" value="Genomic_DNA"/>
</dbReference>
<dbReference type="PIR" id="B64074">
    <property type="entry name" value="B64074"/>
</dbReference>
<dbReference type="RefSeq" id="NP_438676.1">
    <property type="nucleotide sequence ID" value="NC_000907.1"/>
</dbReference>
<dbReference type="SMR" id="P44417"/>
<dbReference type="STRING" id="71421.HI_0518"/>
<dbReference type="EnsemblBacteria" id="AAC22176">
    <property type="protein sequence ID" value="AAC22176"/>
    <property type="gene ID" value="HI_0518"/>
</dbReference>
<dbReference type="KEGG" id="hin:HI_0518"/>
<dbReference type="PATRIC" id="fig|71421.8.peg.537"/>
<dbReference type="eggNOG" id="COG0813">
    <property type="taxonomic scope" value="Bacteria"/>
</dbReference>
<dbReference type="HOGENOM" id="CLU_068457_2_0_6"/>
<dbReference type="OrthoDB" id="9782889at2"/>
<dbReference type="PhylomeDB" id="P44417"/>
<dbReference type="BioCyc" id="HINF71421:G1GJ1-531-MONOMER"/>
<dbReference type="Proteomes" id="UP000000579">
    <property type="component" value="Chromosome"/>
</dbReference>
<dbReference type="GO" id="GO:0005829">
    <property type="term" value="C:cytosol"/>
    <property type="evidence" value="ECO:0000318"/>
    <property type="project" value="GO_Central"/>
</dbReference>
<dbReference type="GO" id="GO:0004731">
    <property type="term" value="F:purine-nucleoside phosphorylase activity"/>
    <property type="evidence" value="ECO:0000318"/>
    <property type="project" value="GO_Central"/>
</dbReference>
<dbReference type="GO" id="GO:0006152">
    <property type="term" value="P:purine nucleoside catabolic process"/>
    <property type="evidence" value="ECO:0000318"/>
    <property type="project" value="GO_Central"/>
</dbReference>
<dbReference type="CDD" id="cd09006">
    <property type="entry name" value="PNP_EcPNPI-like"/>
    <property type="match status" value="1"/>
</dbReference>
<dbReference type="FunFam" id="3.40.50.1580:FF:000002">
    <property type="entry name" value="Purine nucleoside phosphorylase DeoD-type"/>
    <property type="match status" value="1"/>
</dbReference>
<dbReference type="Gene3D" id="3.40.50.1580">
    <property type="entry name" value="Nucleoside phosphorylase domain"/>
    <property type="match status" value="1"/>
</dbReference>
<dbReference type="HAMAP" id="MF_01627">
    <property type="entry name" value="Pur_nucleosid_phosp"/>
    <property type="match status" value="1"/>
</dbReference>
<dbReference type="InterPro" id="IPR004402">
    <property type="entry name" value="DeoD-type"/>
</dbReference>
<dbReference type="InterPro" id="IPR018016">
    <property type="entry name" value="Nucleoside_phosphorylase_CS"/>
</dbReference>
<dbReference type="InterPro" id="IPR000845">
    <property type="entry name" value="Nucleoside_phosphorylase_d"/>
</dbReference>
<dbReference type="InterPro" id="IPR035994">
    <property type="entry name" value="Nucleoside_phosphorylase_sf"/>
</dbReference>
<dbReference type="NCBIfam" id="TIGR00107">
    <property type="entry name" value="deoD"/>
    <property type="match status" value="1"/>
</dbReference>
<dbReference type="NCBIfam" id="NF004489">
    <property type="entry name" value="PRK05819.1"/>
    <property type="match status" value="1"/>
</dbReference>
<dbReference type="NCBIfam" id="NF009914">
    <property type="entry name" value="PRK13374.1"/>
    <property type="match status" value="1"/>
</dbReference>
<dbReference type="PANTHER" id="PTHR43691:SF2">
    <property type="entry name" value="PURINE NUCLEOSIDE PHOSPHORYLASE DEOD-TYPE"/>
    <property type="match status" value="1"/>
</dbReference>
<dbReference type="PANTHER" id="PTHR43691">
    <property type="entry name" value="URIDINE PHOSPHORYLASE"/>
    <property type="match status" value="1"/>
</dbReference>
<dbReference type="Pfam" id="PF01048">
    <property type="entry name" value="PNP_UDP_1"/>
    <property type="match status" value="1"/>
</dbReference>
<dbReference type="SUPFAM" id="SSF53167">
    <property type="entry name" value="Purine and uridine phosphorylases"/>
    <property type="match status" value="1"/>
</dbReference>
<dbReference type="PROSITE" id="PS01232">
    <property type="entry name" value="PNP_UDP_1"/>
    <property type="match status" value="1"/>
</dbReference>
<comment type="function">
    <text evidence="2">Catalyzes the reversible phosphorolytic breakdown of the N-glycosidic bond in the beta-(deoxy)ribonucleoside molecules, with the formation of the corresponding free purine bases and pentose-1-phosphate.</text>
</comment>
<comment type="catalytic activity">
    <reaction evidence="2">
        <text>a purine D-ribonucleoside + phosphate = a purine nucleobase + alpha-D-ribose 1-phosphate</text>
        <dbReference type="Rhea" id="RHEA:19805"/>
        <dbReference type="ChEBI" id="CHEBI:26386"/>
        <dbReference type="ChEBI" id="CHEBI:43474"/>
        <dbReference type="ChEBI" id="CHEBI:57720"/>
        <dbReference type="ChEBI" id="CHEBI:142355"/>
        <dbReference type="EC" id="2.4.2.1"/>
    </reaction>
</comment>
<comment type="catalytic activity">
    <reaction evidence="2">
        <text>a purine 2'-deoxy-D-ribonucleoside + phosphate = a purine nucleobase + 2-deoxy-alpha-D-ribose 1-phosphate</text>
        <dbReference type="Rhea" id="RHEA:36431"/>
        <dbReference type="ChEBI" id="CHEBI:26386"/>
        <dbReference type="ChEBI" id="CHEBI:43474"/>
        <dbReference type="ChEBI" id="CHEBI:57259"/>
        <dbReference type="ChEBI" id="CHEBI:142361"/>
        <dbReference type="EC" id="2.4.2.1"/>
    </reaction>
</comment>
<comment type="subunit">
    <text evidence="2">Homohexamer; trimer of homodimers.</text>
</comment>
<comment type="similarity">
    <text evidence="2">Belongs to the PNP/UDP phosphorylase family.</text>
</comment>
<proteinExistence type="evidence at protein level"/>
<gene>
    <name evidence="2" type="primary">deoD</name>
    <name type="ordered locus">HI_0518</name>
</gene>
<feature type="chain" id="PRO_0000063135" description="Purine nucleoside phosphorylase DeoD-type">
    <location>
        <begin position="1"/>
        <end position="238"/>
    </location>
</feature>
<feature type="active site" description="Proton donor" evidence="2">
    <location>
        <position position="204"/>
    </location>
</feature>
<feature type="binding site" evidence="1">
    <location>
        <position position="4"/>
    </location>
    <ligand>
        <name>a purine D-ribonucleoside</name>
        <dbReference type="ChEBI" id="CHEBI:142355"/>
        <note>ligand shared between dimeric partners</note>
    </ligand>
</feature>
<feature type="binding site" description="in other chain" evidence="1">
    <location>
        <position position="20"/>
    </location>
    <ligand>
        <name>phosphate</name>
        <dbReference type="ChEBI" id="CHEBI:43474"/>
        <note>ligand shared between dimeric partners</note>
    </ligand>
</feature>
<feature type="binding site" description="in other chain" evidence="1">
    <location>
        <position position="24"/>
    </location>
    <ligand>
        <name>phosphate</name>
        <dbReference type="ChEBI" id="CHEBI:43474"/>
        <note>ligand shared between dimeric partners</note>
    </ligand>
</feature>
<feature type="binding site" evidence="1">
    <location>
        <position position="43"/>
    </location>
    <ligand>
        <name>phosphate</name>
        <dbReference type="ChEBI" id="CHEBI:43474"/>
        <note>ligand shared between dimeric partners</note>
    </ligand>
</feature>
<feature type="binding site" description="in other chain" evidence="1">
    <location>
        <begin position="87"/>
        <end position="90"/>
    </location>
    <ligand>
        <name>phosphate</name>
        <dbReference type="ChEBI" id="CHEBI:43474"/>
        <note>ligand shared between dimeric partners</note>
    </ligand>
</feature>
<feature type="binding site" description="in other chain" evidence="1">
    <location>
        <begin position="179"/>
        <end position="181"/>
    </location>
    <ligand>
        <name>a purine D-ribonucleoside</name>
        <dbReference type="ChEBI" id="CHEBI:142355"/>
        <note>ligand shared between dimeric partners</note>
    </ligand>
</feature>
<feature type="binding site" description="in other chain" evidence="1">
    <location>
        <begin position="203"/>
        <end position="204"/>
    </location>
    <ligand>
        <name>a purine D-ribonucleoside</name>
        <dbReference type="ChEBI" id="CHEBI:142355"/>
        <note>ligand shared between dimeric partners</note>
    </ligand>
</feature>
<feature type="site" description="Important for catalytic activity" evidence="2">
    <location>
        <position position="217"/>
    </location>
</feature>
<organism>
    <name type="scientific">Haemophilus influenzae (strain ATCC 51907 / DSM 11121 / KW20 / Rd)</name>
    <dbReference type="NCBI Taxonomy" id="71421"/>
    <lineage>
        <taxon>Bacteria</taxon>
        <taxon>Pseudomonadati</taxon>
        <taxon>Pseudomonadota</taxon>
        <taxon>Gammaproteobacteria</taxon>
        <taxon>Pasteurellales</taxon>
        <taxon>Pasteurellaceae</taxon>
        <taxon>Haemophilus</taxon>
    </lineage>
</organism>
<name>DEOD_HAEIN</name>
<reference key="1">
    <citation type="journal article" date="1995" name="Science">
        <title>Whole-genome random sequencing and assembly of Haemophilus influenzae Rd.</title>
        <authorList>
            <person name="Fleischmann R.D."/>
            <person name="Adams M.D."/>
            <person name="White O."/>
            <person name="Clayton R.A."/>
            <person name="Kirkness E.F."/>
            <person name="Kerlavage A.R."/>
            <person name="Bult C.J."/>
            <person name="Tomb J.-F."/>
            <person name="Dougherty B.A."/>
            <person name="Merrick J.M."/>
            <person name="McKenney K."/>
            <person name="Sutton G.G."/>
            <person name="FitzHugh W."/>
            <person name="Fields C.A."/>
            <person name="Gocayne J.D."/>
            <person name="Scott J.D."/>
            <person name="Shirley R."/>
            <person name="Liu L.-I."/>
            <person name="Glodek A."/>
            <person name="Kelley J.M."/>
            <person name="Weidman J.F."/>
            <person name="Phillips C.A."/>
            <person name="Spriggs T."/>
            <person name="Hedblom E."/>
            <person name="Cotton M.D."/>
            <person name="Utterback T.R."/>
            <person name="Hanna M.C."/>
            <person name="Nguyen D.T."/>
            <person name="Saudek D.M."/>
            <person name="Brandon R.C."/>
            <person name="Fine L.D."/>
            <person name="Fritchman J.L."/>
            <person name="Fuhrmann J.L."/>
            <person name="Geoghagen N.S.M."/>
            <person name="Gnehm C.L."/>
            <person name="McDonald L.A."/>
            <person name="Small K.V."/>
            <person name="Fraser C.M."/>
            <person name="Smith H.O."/>
            <person name="Venter J.C."/>
        </authorList>
    </citation>
    <scope>NUCLEOTIDE SEQUENCE [LARGE SCALE GENOMIC DNA]</scope>
    <source>
        <strain>ATCC 51907 / DSM 11121 / KW20 / Rd</strain>
    </source>
</reference>
<reference key="2">
    <citation type="journal article" date="2000" name="Electrophoresis">
        <title>Two-dimensional map of the proteome of Haemophilus influenzae.</title>
        <authorList>
            <person name="Langen H."/>
            <person name="Takacs B."/>
            <person name="Evers S."/>
            <person name="Berndt P."/>
            <person name="Lahm H.W."/>
            <person name="Wipf B."/>
            <person name="Gray C."/>
            <person name="Fountoulakis M."/>
        </authorList>
    </citation>
    <scope>PROTEIN SEQUENCE OF 1-10</scope>
    <source>
        <strain>ATCC 51907 / DSM 11121 / KW20 / Rd</strain>
    </source>
</reference>
<accession>P44417</accession>
<keyword id="KW-0903">Direct protein sequencing</keyword>
<keyword id="KW-0328">Glycosyltransferase</keyword>
<keyword id="KW-1185">Reference proteome</keyword>
<keyword id="KW-0808">Transferase</keyword>